<comment type="function">
    <text evidence="1">RuBisCO catalyzes two reactions: the carboxylation of D-ribulose 1,5-bisphosphate, the primary event in carbon dioxide fixation, as well as the oxidative fragmentation of the pentose substrate in the photorespiration process. Both reactions occur simultaneously and in competition at the same active site.</text>
</comment>
<comment type="catalytic activity">
    <reaction evidence="1">
        <text>2 (2R)-3-phosphoglycerate + 2 H(+) = D-ribulose 1,5-bisphosphate + CO2 + H2O</text>
        <dbReference type="Rhea" id="RHEA:23124"/>
        <dbReference type="ChEBI" id="CHEBI:15377"/>
        <dbReference type="ChEBI" id="CHEBI:15378"/>
        <dbReference type="ChEBI" id="CHEBI:16526"/>
        <dbReference type="ChEBI" id="CHEBI:57870"/>
        <dbReference type="ChEBI" id="CHEBI:58272"/>
        <dbReference type="EC" id="4.1.1.39"/>
    </reaction>
</comment>
<comment type="catalytic activity">
    <reaction evidence="1">
        <text>D-ribulose 1,5-bisphosphate + O2 = 2-phosphoglycolate + (2R)-3-phosphoglycerate + 2 H(+)</text>
        <dbReference type="Rhea" id="RHEA:36631"/>
        <dbReference type="ChEBI" id="CHEBI:15378"/>
        <dbReference type="ChEBI" id="CHEBI:15379"/>
        <dbReference type="ChEBI" id="CHEBI:57870"/>
        <dbReference type="ChEBI" id="CHEBI:58033"/>
        <dbReference type="ChEBI" id="CHEBI:58272"/>
    </reaction>
</comment>
<comment type="cofactor">
    <cofactor evidence="1">
        <name>Mg(2+)</name>
        <dbReference type="ChEBI" id="CHEBI:18420"/>
    </cofactor>
    <text evidence="1">Binds 1 Mg(2+) ion per subunit.</text>
</comment>
<comment type="subunit">
    <text evidence="1">Heterohexadecamer of 8 large chains and 8 small chains; disulfide-linked. The disulfide link is formed within the large subunit homodimers.</text>
</comment>
<comment type="subcellular location">
    <subcellularLocation>
        <location>Plastid</location>
        <location>Chloroplast</location>
    </subcellularLocation>
</comment>
<comment type="PTM">
    <text evidence="1">The disulfide bond which can form in the large chain dimeric partners within the hexadecamer appears to be associated with oxidative stress and protein turnover.</text>
</comment>
<comment type="miscellaneous">
    <text evidence="1">The basic functional RuBisCO is composed of a large chain homodimer in a 'head-to-tail' conformation. In form I RuBisCO this homodimer is arranged in a barrel-like tetramer with the small subunits forming a tetrameric 'cap' on each end of the 'barrel'.</text>
</comment>
<comment type="similarity">
    <text evidence="1">Belongs to the RuBisCO large chain family. Type I subfamily.</text>
</comment>
<feature type="chain" id="PRO_0000062518" description="Ribulose bisphosphate carboxylase large chain">
    <location>
        <begin position="1" status="less than"/>
        <end position="455" status="greater than"/>
    </location>
</feature>
<feature type="active site" description="Proton acceptor" evidence="1">
    <location>
        <position position="166"/>
    </location>
</feature>
<feature type="active site" description="Proton acceptor" evidence="1">
    <location>
        <position position="285"/>
    </location>
</feature>
<feature type="binding site" description="in homodimeric partner" evidence="1">
    <location>
        <position position="114"/>
    </location>
    <ligand>
        <name>substrate</name>
    </ligand>
</feature>
<feature type="binding site" evidence="1">
    <location>
        <position position="164"/>
    </location>
    <ligand>
        <name>substrate</name>
    </ligand>
</feature>
<feature type="binding site" evidence="1">
    <location>
        <position position="168"/>
    </location>
    <ligand>
        <name>substrate</name>
    </ligand>
</feature>
<feature type="binding site" description="via carbamate group" evidence="1">
    <location>
        <position position="192"/>
    </location>
    <ligand>
        <name>Mg(2+)</name>
        <dbReference type="ChEBI" id="CHEBI:18420"/>
    </ligand>
</feature>
<feature type="binding site" evidence="1">
    <location>
        <position position="194"/>
    </location>
    <ligand>
        <name>Mg(2+)</name>
        <dbReference type="ChEBI" id="CHEBI:18420"/>
    </ligand>
</feature>
<feature type="binding site" evidence="1">
    <location>
        <position position="195"/>
    </location>
    <ligand>
        <name>Mg(2+)</name>
        <dbReference type="ChEBI" id="CHEBI:18420"/>
    </ligand>
</feature>
<feature type="binding site" evidence="1">
    <location>
        <position position="286"/>
    </location>
    <ligand>
        <name>substrate</name>
    </ligand>
</feature>
<feature type="binding site" evidence="1">
    <location>
        <position position="318"/>
    </location>
    <ligand>
        <name>substrate</name>
    </ligand>
</feature>
<feature type="binding site" evidence="1">
    <location>
        <position position="370"/>
    </location>
    <ligand>
        <name>substrate</name>
    </ligand>
</feature>
<feature type="site" description="Transition state stabilizer" evidence="1">
    <location>
        <position position="325"/>
    </location>
</feature>
<feature type="modified residue" description="N6,N6,N6-trimethyllysine" evidence="1">
    <location>
        <position position="5"/>
    </location>
</feature>
<feature type="modified residue" description="N6-carboxylysine" evidence="1">
    <location>
        <position position="192"/>
    </location>
</feature>
<feature type="disulfide bond" description="Interchain; in linked form" evidence="1">
    <location>
        <position position="238"/>
    </location>
</feature>
<feature type="non-terminal residue">
    <location>
        <position position="1"/>
    </location>
</feature>
<feature type="non-terminal residue">
    <location>
        <position position="455"/>
    </location>
</feature>
<evidence type="ECO:0000255" key="1">
    <source>
        <dbReference type="HAMAP-Rule" id="MF_01338"/>
    </source>
</evidence>
<name>RBL_LUPLU</name>
<gene>
    <name evidence="1" type="primary">rbcL</name>
</gene>
<dbReference type="EC" id="4.1.1.39" evidence="1"/>
<dbReference type="EMBL" id="Z70066">
    <property type="protein sequence ID" value="CAA93925.1"/>
    <property type="molecule type" value="Genomic_DNA"/>
</dbReference>
<dbReference type="SMR" id="P69583"/>
<dbReference type="GO" id="GO:0009507">
    <property type="term" value="C:chloroplast"/>
    <property type="evidence" value="ECO:0007669"/>
    <property type="project" value="UniProtKB-SubCell"/>
</dbReference>
<dbReference type="GO" id="GO:0000287">
    <property type="term" value="F:magnesium ion binding"/>
    <property type="evidence" value="ECO:0007669"/>
    <property type="project" value="InterPro"/>
</dbReference>
<dbReference type="GO" id="GO:0004497">
    <property type="term" value="F:monooxygenase activity"/>
    <property type="evidence" value="ECO:0007669"/>
    <property type="project" value="UniProtKB-KW"/>
</dbReference>
<dbReference type="GO" id="GO:0016984">
    <property type="term" value="F:ribulose-bisphosphate carboxylase activity"/>
    <property type="evidence" value="ECO:0007669"/>
    <property type="project" value="UniProtKB-EC"/>
</dbReference>
<dbReference type="GO" id="GO:0009853">
    <property type="term" value="P:photorespiration"/>
    <property type="evidence" value="ECO:0007669"/>
    <property type="project" value="UniProtKB-KW"/>
</dbReference>
<dbReference type="GO" id="GO:0019253">
    <property type="term" value="P:reductive pentose-phosphate cycle"/>
    <property type="evidence" value="ECO:0007669"/>
    <property type="project" value="UniProtKB-KW"/>
</dbReference>
<dbReference type="CDD" id="cd08212">
    <property type="entry name" value="RuBisCO_large_I"/>
    <property type="match status" value="1"/>
</dbReference>
<dbReference type="FunFam" id="3.20.20.110:FF:000001">
    <property type="entry name" value="Ribulose bisphosphate carboxylase large chain"/>
    <property type="match status" value="1"/>
</dbReference>
<dbReference type="FunFam" id="3.30.70.150:FF:000001">
    <property type="entry name" value="Ribulose bisphosphate carboxylase large chain"/>
    <property type="match status" value="1"/>
</dbReference>
<dbReference type="Gene3D" id="3.20.20.110">
    <property type="entry name" value="Ribulose bisphosphate carboxylase, large subunit, C-terminal domain"/>
    <property type="match status" value="1"/>
</dbReference>
<dbReference type="Gene3D" id="3.30.70.150">
    <property type="entry name" value="RuBisCO large subunit, N-terminal domain"/>
    <property type="match status" value="1"/>
</dbReference>
<dbReference type="HAMAP" id="MF_01338">
    <property type="entry name" value="RuBisCO_L_type1"/>
    <property type="match status" value="1"/>
</dbReference>
<dbReference type="InterPro" id="IPR033966">
    <property type="entry name" value="RuBisCO"/>
</dbReference>
<dbReference type="InterPro" id="IPR020878">
    <property type="entry name" value="RuBisCo_large_chain_AS"/>
</dbReference>
<dbReference type="InterPro" id="IPR000685">
    <property type="entry name" value="RuBisCO_lsu_C"/>
</dbReference>
<dbReference type="InterPro" id="IPR036376">
    <property type="entry name" value="RuBisCO_lsu_C_sf"/>
</dbReference>
<dbReference type="InterPro" id="IPR017443">
    <property type="entry name" value="RuBisCO_lsu_fd_N"/>
</dbReference>
<dbReference type="InterPro" id="IPR036422">
    <property type="entry name" value="RuBisCO_lsu_N_sf"/>
</dbReference>
<dbReference type="InterPro" id="IPR020888">
    <property type="entry name" value="RuBisCO_lsuI"/>
</dbReference>
<dbReference type="NCBIfam" id="NF003252">
    <property type="entry name" value="PRK04208.1"/>
    <property type="match status" value="1"/>
</dbReference>
<dbReference type="PANTHER" id="PTHR42704">
    <property type="entry name" value="RIBULOSE BISPHOSPHATE CARBOXYLASE"/>
    <property type="match status" value="1"/>
</dbReference>
<dbReference type="PANTHER" id="PTHR42704:SF16">
    <property type="entry name" value="RIBULOSE BISPHOSPHATE CARBOXYLASE LARGE CHAIN"/>
    <property type="match status" value="1"/>
</dbReference>
<dbReference type="Pfam" id="PF00016">
    <property type="entry name" value="RuBisCO_large"/>
    <property type="match status" value="1"/>
</dbReference>
<dbReference type="Pfam" id="PF02788">
    <property type="entry name" value="RuBisCO_large_N"/>
    <property type="match status" value="1"/>
</dbReference>
<dbReference type="SFLD" id="SFLDG01052">
    <property type="entry name" value="RuBisCO"/>
    <property type="match status" value="1"/>
</dbReference>
<dbReference type="SFLD" id="SFLDS00014">
    <property type="entry name" value="RuBisCO"/>
    <property type="match status" value="1"/>
</dbReference>
<dbReference type="SFLD" id="SFLDG00301">
    <property type="entry name" value="RuBisCO-like_proteins"/>
    <property type="match status" value="1"/>
</dbReference>
<dbReference type="SUPFAM" id="SSF51649">
    <property type="entry name" value="RuBisCo, C-terminal domain"/>
    <property type="match status" value="1"/>
</dbReference>
<dbReference type="SUPFAM" id="SSF54966">
    <property type="entry name" value="RuBisCO, large subunit, small (N-terminal) domain"/>
    <property type="match status" value="1"/>
</dbReference>
<dbReference type="PROSITE" id="PS00157">
    <property type="entry name" value="RUBISCO_LARGE"/>
    <property type="match status" value="1"/>
</dbReference>
<keyword id="KW-0113">Calvin cycle</keyword>
<keyword id="KW-0120">Carbon dioxide fixation</keyword>
<keyword id="KW-0150">Chloroplast</keyword>
<keyword id="KW-1015">Disulfide bond</keyword>
<keyword id="KW-0456">Lyase</keyword>
<keyword id="KW-0460">Magnesium</keyword>
<keyword id="KW-0479">Metal-binding</keyword>
<keyword id="KW-0488">Methylation</keyword>
<keyword id="KW-0503">Monooxygenase</keyword>
<keyword id="KW-0560">Oxidoreductase</keyword>
<keyword id="KW-0601">Photorespiration</keyword>
<keyword id="KW-0602">Photosynthesis</keyword>
<keyword id="KW-0934">Plastid</keyword>
<proteinExistence type="inferred from homology"/>
<organism>
    <name type="scientific">Lupinus luteus</name>
    <name type="common">European yellow lupine</name>
    <dbReference type="NCBI Taxonomy" id="3873"/>
    <lineage>
        <taxon>Eukaryota</taxon>
        <taxon>Viridiplantae</taxon>
        <taxon>Streptophyta</taxon>
        <taxon>Embryophyta</taxon>
        <taxon>Tracheophyta</taxon>
        <taxon>Spermatophyta</taxon>
        <taxon>Magnoliopsida</taxon>
        <taxon>eudicotyledons</taxon>
        <taxon>Gunneridae</taxon>
        <taxon>Pentapetalae</taxon>
        <taxon>rosids</taxon>
        <taxon>fabids</taxon>
        <taxon>Fabales</taxon>
        <taxon>Fabaceae</taxon>
        <taxon>Papilionoideae</taxon>
        <taxon>50 kb inversion clade</taxon>
        <taxon>genistoids sensu lato</taxon>
        <taxon>core genistoids</taxon>
        <taxon>Genisteae</taxon>
        <taxon>Lupinus</taxon>
    </lineage>
</organism>
<accession>P69583</accession>
<accession>P52773</accession>
<accession>P52774</accession>
<reference key="1">
    <citation type="journal article" date="1995" name="Bot. Acta">
        <title>Molecular phylogeny of the Papilionoideae (family Leguminosae): rbcL sequences versus chemical taxonomy.</title>
        <authorList>
            <person name="Kaess E."/>
            <person name="Wink M."/>
        </authorList>
    </citation>
    <scope>NUCLEOTIDE SEQUENCE [GENOMIC DNA]</scope>
    <source>
        <tissue>Leaf</tissue>
    </source>
</reference>
<geneLocation type="chloroplast"/>
<sequence>SVGFKAGVKDYKLTYYTPDYKTKDTDILAAFRVTPQPGVPPEEAGAAVAAESSTGTWTTVWTDGLTSLDRYKGRCYHIEPVAGEESQFIAYVAYPLDLFEEGSVTNMFTSIVGNVFGFKALRALRLEDLRIPNAYVKTFQGPPHGIQVERDKLNKYGRPLLGCTIKPKLGLSAKNYGRAVYECLRGGLDFTKDDENVNSQPFMRWRDRFLFCAEALYKAQAETGEIKGHYLNATAGTCEEMIKRAVFARELGVPIVMHDYLTGGFTANTSLSHYCRDNGLLLHIHRAMHAVIDRQKNHGMHFRVLAKALRLSGGDHIHSGTVVGKLEGEREITLGFVDLLRDDFVEKDRSRGIYFTQDWVSLPGVLPVASGGIHVWHMPALTEIFGDDSVLQFGGGTLGHPWGNAPGAVANRVALEACVQARNEGRDLASEGNQIIREASKWSPELAAACEVWKE</sequence>
<protein>
    <recommendedName>
        <fullName evidence="1">Ribulose bisphosphate carboxylase large chain</fullName>
        <shortName evidence="1">RuBisCO large subunit</shortName>
        <ecNumber evidence="1">4.1.1.39</ecNumber>
    </recommendedName>
</protein>